<sequence length="122" mass="13047">MIQQETRLKVADNSGAREILTIKVLGGSGRKFANIGDVIVASVKQATPGGAVKKGDVVKAVIVRTKSGARRPDGSYIKFDDNAAVIIRDDKTPRGTRIFGPVARELREGGYMKIVSLAPEVL</sequence>
<dbReference type="EMBL" id="FM204884">
    <property type="protein sequence ID" value="CAW97662.1"/>
    <property type="molecule type" value="Genomic_DNA"/>
</dbReference>
<dbReference type="SMR" id="C0MCC0"/>
<dbReference type="KEGG" id="seq:SZO_00600"/>
<dbReference type="eggNOG" id="COG0093">
    <property type="taxonomic scope" value="Bacteria"/>
</dbReference>
<dbReference type="HOGENOM" id="CLU_095071_2_1_9"/>
<dbReference type="Proteomes" id="UP000001368">
    <property type="component" value="Chromosome"/>
</dbReference>
<dbReference type="GO" id="GO:0022625">
    <property type="term" value="C:cytosolic large ribosomal subunit"/>
    <property type="evidence" value="ECO:0007669"/>
    <property type="project" value="TreeGrafter"/>
</dbReference>
<dbReference type="GO" id="GO:0070180">
    <property type="term" value="F:large ribosomal subunit rRNA binding"/>
    <property type="evidence" value="ECO:0007669"/>
    <property type="project" value="TreeGrafter"/>
</dbReference>
<dbReference type="GO" id="GO:0003735">
    <property type="term" value="F:structural constituent of ribosome"/>
    <property type="evidence" value="ECO:0007669"/>
    <property type="project" value="InterPro"/>
</dbReference>
<dbReference type="GO" id="GO:0006412">
    <property type="term" value="P:translation"/>
    <property type="evidence" value="ECO:0007669"/>
    <property type="project" value="UniProtKB-UniRule"/>
</dbReference>
<dbReference type="CDD" id="cd00337">
    <property type="entry name" value="Ribosomal_uL14"/>
    <property type="match status" value="1"/>
</dbReference>
<dbReference type="FunFam" id="2.40.150.20:FF:000001">
    <property type="entry name" value="50S ribosomal protein L14"/>
    <property type="match status" value="1"/>
</dbReference>
<dbReference type="Gene3D" id="2.40.150.20">
    <property type="entry name" value="Ribosomal protein L14"/>
    <property type="match status" value="1"/>
</dbReference>
<dbReference type="HAMAP" id="MF_01367">
    <property type="entry name" value="Ribosomal_uL14"/>
    <property type="match status" value="1"/>
</dbReference>
<dbReference type="InterPro" id="IPR000218">
    <property type="entry name" value="Ribosomal_uL14"/>
</dbReference>
<dbReference type="InterPro" id="IPR005745">
    <property type="entry name" value="Ribosomal_uL14_bac-type"/>
</dbReference>
<dbReference type="InterPro" id="IPR019972">
    <property type="entry name" value="Ribosomal_uL14_CS"/>
</dbReference>
<dbReference type="InterPro" id="IPR036853">
    <property type="entry name" value="Ribosomal_uL14_sf"/>
</dbReference>
<dbReference type="NCBIfam" id="TIGR01067">
    <property type="entry name" value="rplN_bact"/>
    <property type="match status" value="1"/>
</dbReference>
<dbReference type="PANTHER" id="PTHR11761">
    <property type="entry name" value="50S/60S RIBOSOMAL PROTEIN L14/L23"/>
    <property type="match status" value="1"/>
</dbReference>
<dbReference type="PANTHER" id="PTHR11761:SF3">
    <property type="entry name" value="LARGE RIBOSOMAL SUBUNIT PROTEIN UL14M"/>
    <property type="match status" value="1"/>
</dbReference>
<dbReference type="Pfam" id="PF00238">
    <property type="entry name" value="Ribosomal_L14"/>
    <property type="match status" value="1"/>
</dbReference>
<dbReference type="SMART" id="SM01374">
    <property type="entry name" value="Ribosomal_L14"/>
    <property type="match status" value="1"/>
</dbReference>
<dbReference type="SUPFAM" id="SSF50193">
    <property type="entry name" value="Ribosomal protein L14"/>
    <property type="match status" value="1"/>
</dbReference>
<dbReference type="PROSITE" id="PS00049">
    <property type="entry name" value="RIBOSOMAL_L14"/>
    <property type="match status" value="1"/>
</dbReference>
<gene>
    <name evidence="1" type="primary">rplN</name>
    <name type="ordered locus">SZO_00600</name>
</gene>
<name>RL14_STRS7</name>
<accession>C0MCC0</accession>
<organism>
    <name type="scientific">Streptococcus equi subsp. zooepidemicus (strain H70)</name>
    <dbReference type="NCBI Taxonomy" id="553483"/>
    <lineage>
        <taxon>Bacteria</taxon>
        <taxon>Bacillati</taxon>
        <taxon>Bacillota</taxon>
        <taxon>Bacilli</taxon>
        <taxon>Lactobacillales</taxon>
        <taxon>Streptococcaceae</taxon>
        <taxon>Streptococcus</taxon>
    </lineage>
</organism>
<reference key="1">
    <citation type="journal article" date="2009" name="PLoS Pathog.">
        <title>Genomic evidence for the evolution of Streptococcus equi: host restriction, increased virulence, and genetic exchange with human pathogens.</title>
        <authorList>
            <person name="Holden M.T.G."/>
            <person name="Heather Z."/>
            <person name="Paillot R."/>
            <person name="Steward K.F."/>
            <person name="Webb K."/>
            <person name="Ainslie F."/>
            <person name="Jourdan T."/>
            <person name="Bason N.C."/>
            <person name="Holroyd N.E."/>
            <person name="Mungall K."/>
            <person name="Quail M.A."/>
            <person name="Sanders M."/>
            <person name="Simmonds M."/>
            <person name="Willey D."/>
            <person name="Brooks K."/>
            <person name="Aanensen D.M."/>
            <person name="Spratt B.G."/>
            <person name="Jolley K.A."/>
            <person name="Maiden M.C.J."/>
            <person name="Kehoe M."/>
            <person name="Chanter N."/>
            <person name="Bentley S.D."/>
            <person name="Robinson C."/>
            <person name="Maskell D.J."/>
            <person name="Parkhill J."/>
            <person name="Waller A.S."/>
        </authorList>
    </citation>
    <scope>NUCLEOTIDE SEQUENCE [LARGE SCALE GENOMIC DNA]</scope>
    <source>
        <strain>H70</strain>
    </source>
</reference>
<comment type="function">
    <text evidence="1">Binds to 23S rRNA. Forms part of two intersubunit bridges in the 70S ribosome.</text>
</comment>
<comment type="subunit">
    <text evidence="1">Part of the 50S ribosomal subunit. Forms a cluster with proteins L3 and L19. In the 70S ribosome, L14 and L19 interact and together make contacts with the 16S rRNA in bridges B5 and B8.</text>
</comment>
<comment type="similarity">
    <text evidence="1">Belongs to the universal ribosomal protein uL14 family.</text>
</comment>
<protein>
    <recommendedName>
        <fullName evidence="1">Large ribosomal subunit protein uL14</fullName>
    </recommendedName>
    <alternativeName>
        <fullName evidence="2">50S ribosomal protein L14</fullName>
    </alternativeName>
</protein>
<evidence type="ECO:0000255" key="1">
    <source>
        <dbReference type="HAMAP-Rule" id="MF_01367"/>
    </source>
</evidence>
<evidence type="ECO:0000305" key="2"/>
<proteinExistence type="inferred from homology"/>
<keyword id="KW-0687">Ribonucleoprotein</keyword>
<keyword id="KW-0689">Ribosomal protein</keyword>
<keyword id="KW-0694">RNA-binding</keyword>
<keyword id="KW-0699">rRNA-binding</keyword>
<feature type="chain" id="PRO_1000214992" description="Large ribosomal subunit protein uL14">
    <location>
        <begin position="1"/>
        <end position="122"/>
    </location>
</feature>